<feature type="chain" id="PRO_0000279499" description="Sterile alpha motif domain-containing protein 9-like">
    <location>
        <begin position="1"/>
        <end position="1561"/>
    </location>
</feature>
<feature type="domain" description="SAM" evidence="2">
    <location>
        <begin position="14"/>
        <end position="79"/>
    </location>
</feature>
<feature type="region of interest" description="Disordered" evidence="3">
    <location>
        <begin position="78"/>
        <end position="157"/>
    </location>
</feature>
<feature type="compositionally biased region" description="Basic and acidic residues" evidence="3">
    <location>
        <begin position="82"/>
        <end position="107"/>
    </location>
</feature>
<feature type="compositionally biased region" description="Basic and acidic residues" evidence="3">
    <location>
        <begin position="142"/>
        <end position="153"/>
    </location>
</feature>
<keyword id="KW-0967">Endosome</keyword>
<keyword id="KW-0496">Mitochondrion</keyword>
<keyword id="KW-1185">Reference proteome</keyword>
<gene>
    <name type="primary">Samd9l</name>
    <name type="synonym">Kiaa2005</name>
</gene>
<accession>Q69Z37</accession>
<comment type="function">
    <text evidence="4">May be involved in endosome fusion. Mediates down-regulation of growth factor signaling via internalization of growth factor receptors.</text>
</comment>
<comment type="subunit">
    <text evidence="1">Interacts with EEA1.</text>
</comment>
<comment type="interaction">
    <interactant intactId="EBI-8784283">
        <id>Q69Z37</id>
    </interactant>
    <interactant intactId="EBI-298113">
        <id>Q15075</id>
        <label>EEA1</label>
    </interactant>
    <organismsDiffer>true</organismsDiffer>
    <experiments>2</experiments>
</comment>
<comment type="subcellular location">
    <subcellularLocation>
        <location evidence="4">Early endosome</location>
    </subcellularLocation>
    <subcellularLocation>
        <location evidence="1">Mitochondrion</location>
    </subcellularLocation>
</comment>
<comment type="disruption phenotype">
    <text evidence="4">Mice die of white blood cells proliferation that accumulate in the bone marrow and interfere with the production of normal blood cells.</text>
</comment>
<comment type="sequence caution" evidence="5">
    <conflict type="erroneous initiation">
        <sequence resource="EMBL-CDS" id="BAD32607"/>
    </conflict>
</comment>
<evidence type="ECO:0000250" key="1">
    <source>
        <dbReference type="UniProtKB" id="Q8IVG5"/>
    </source>
</evidence>
<evidence type="ECO:0000255" key="2">
    <source>
        <dbReference type="PROSITE-ProRule" id="PRU00184"/>
    </source>
</evidence>
<evidence type="ECO:0000256" key="3">
    <source>
        <dbReference type="SAM" id="MobiDB-lite"/>
    </source>
</evidence>
<evidence type="ECO:0000269" key="4">
    <source>
    </source>
</evidence>
<evidence type="ECO:0000305" key="5"/>
<sequence length="1561" mass="180203">MSGQVTQPKLIKDWTKEHVRKWVTEDLNIVEKYAQILFKEEVTGMVLQELTEEDLREMGLPRGPALLIKRMYNKLISSPESHNQDSRELNDKKLSTKEQQTKTKNEEENSVSSNSDHGLRETGQNEEQEPSLTKENMLGDVVTKDMEDNKPKPEQMSCTPYPFDSFCDVKQYIEHSILRVAETGPLNLIDPIHEFKAFTNTKKATEEDIKMKFSNETFRFAAACMNSRTNGTIHFGVKDKPHGEIVGVQVTSKDIFVNHFNTMITKYFEDSEISEARACIREPRFVEVLLQNNTQSNRFVIEVDVIPRHSICQEKYFYIMMQSSTGKTWKQSKDTSLFVREGASSKNILGNPNQRDREFKKFLEDLKMWTASRKAAEEELRMVTKKESEGLKLSKLLTRHQGSLDESYYDWYILVTNTCAPTQLEHLEFIKEMKLFAVLDFDPYSHIKGVVKAYRESRIANLHLPSHYEEKTTIAEKISTLKLYEQPSWIFCNGRVDLSCQPLEPHLWQRDRASGVRRLISFLTDENIIVKGKVLVVFLLLSPIENQKDPLIETFCAFYQVFNGMDNMLCICVNSAIYQQWSDLLQVRLEIKDDLAKHSISTLNIELVNNTILKLKSVIQSSRRFLPSCGSSSVILEKMDEDIMSALEILCENECKDTDIEKDESQFLEFKKSREEHFYRGGRVSWWNFYFSSENYSSAFVKRDSFEELTTLIQQCADSPKPVFVKVINLYHHPGCGGTTLAMHVLWDLKQKFRCAVLKNKATDFVEIGEQVSKLMSYKATSHEDFIPVLLLVDDFEEQENAYILQNAINAFIAEKGLRYEKTLVIILNCMRSQNPDESAKLANSISLKYQLSPKEQRAFEAKLQEIEKEHKNCENFYSFMILKGNFDTTYIKNVVKNTLKDLDAKSRRAQLISYLALLNSYVTDSTISVSQCEIFLGITYTKKYGKPETVEKNMGTYSTLLIRTEVSDYGRYTGIRIIHPLIATHCLKELEMSYRMDKCQIALNMLEENVLYDSGLGRDKFKYDVQTLLLTRQRKEHGAETDTLFSPLIEELQNEETEKVLIAGSDRFPQNAFICQALARHFYIKEKNFSTALVWANLAKRKAPKNSYISDTLGQVYKSELNSGWEVAEKASKAFKESQNQSDSKDYGTEAWSPQNSQRRYDTFNTAGFFGEIEVGLDTIQLLQLTPLFHKENEISKESMAEFLSGKGTILSDPKGEYCVVLSKFTSLLQNLHSDLERCFHFFGDYMGFLKPRNTPKELTELLLSKKVSRCFKKYVELFCHLDTNLVQGKEDLLLQKENCRKRIQAWRADTFSGLLEYLNPNHKEANNIENIVGNYTFLLQDILNKQLSKVLTKDIQNFILANIILSCLKPSSKYILPFSTLKKKLREVLQIVGLTHSYPDPYFLACLLFWPENKELDEDSTLIEKYVSSLNRSFRRQYKHMCRSRQPSTLFYLGQKKGLNSLVHKAEIERYFSEVQDSNSFWHSGVVWEKREVKDLLRLLDGQAEGKLISLEYGTEAKIKIPVTSVYSAPLRSGRNIERVSFYLGFSIEGPLAYGIKVI</sequence>
<name>SAM9L_MOUSE</name>
<protein>
    <recommendedName>
        <fullName>Sterile alpha motif domain-containing protein 9-like</fullName>
        <shortName>SAM domain-containing protein 9-like</shortName>
    </recommendedName>
</protein>
<proteinExistence type="evidence at protein level"/>
<dbReference type="EMBL" id="AK173329">
    <property type="protein sequence ID" value="BAD32607.1"/>
    <property type="status" value="ALT_INIT"/>
    <property type="molecule type" value="Transcribed_RNA"/>
</dbReference>
<dbReference type="SMR" id="Q69Z37"/>
<dbReference type="FunCoup" id="Q69Z37">
    <property type="interactions" value="834"/>
</dbReference>
<dbReference type="IntAct" id="Q69Z37">
    <property type="interactions" value="2"/>
</dbReference>
<dbReference type="STRING" id="10090.ENSMUSP00000112688"/>
<dbReference type="GlyGen" id="Q69Z37">
    <property type="glycosylation" value="1 site, 1 O-linked glycan (1 site)"/>
</dbReference>
<dbReference type="iPTMnet" id="Q69Z37"/>
<dbReference type="PhosphoSitePlus" id="Q69Z37"/>
<dbReference type="jPOST" id="Q69Z37"/>
<dbReference type="PaxDb" id="10090-ENSMUSP00000112688"/>
<dbReference type="ProteomicsDB" id="256588"/>
<dbReference type="Pumba" id="Q69Z37"/>
<dbReference type="AGR" id="MGI:1343184"/>
<dbReference type="MGI" id="MGI:1343184">
    <property type="gene designation" value="Samd9l"/>
</dbReference>
<dbReference type="eggNOG" id="ENOG502QPY6">
    <property type="taxonomic scope" value="Eukaryota"/>
</dbReference>
<dbReference type="InParanoid" id="Q69Z37"/>
<dbReference type="ChiTaRS" id="Samd9l">
    <property type="organism name" value="mouse"/>
</dbReference>
<dbReference type="PRO" id="PR:Q69Z37"/>
<dbReference type="Proteomes" id="UP000000589">
    <property type="component" value="Unplaced"/>
</dbReference>
<dbReference type="RNAct" id="Q69Z37">
    <property type="molecule type" value="protein"/>
</dbReference>
<dbReference type="GO" id="GO:0005769">
    <property type="term" value="C:early endosome"/>
    <property type="evidence" value="ECO:0000314"/>
    <property type="project" value="MGI"/>
</dbReference>
<dbReference type="GO" id="GO:0005739">
    <property type="term" value="C:mitochondrion"/>
    <property type="evidence" value="ECO:0000250"/>
    <property type="project" value="UniProtKB"/>
</dbReference>
<dbReference type="GO" id="GO:0035726">
    <property type="term" value="P:common myeloid progenitor cell proliferation"/>
    <property type="evidence" value="ECO:0000315"/>
    <property type="project" value="MGI"/>
</dbReference>
<dbReference type="GO" id="GO:0034058">
    <property type="term" value="P:endosomal vesicle fusion"/>
    <property type="evidence" value="ECO:0000315"/>
    <property type="project" value="MGI"/>
</dbReference>
<dbReference type="GO" id="GO:0002244">
    <property type="term" value="P:hematopoietic progenitor cell differentiation"/>
    <property type="evidence" value="ECO:0000315"/>
    <property type="project" value="MGI"/>
</dbReference>
<dbReference type="GO" id="GO:0042176">
    <property type="term" value="P:regulation of protein catabolic process"/>
    <property type="evidence" value="ECO:0000315"/>
    <property type="project" value="MGI"/>
</dbReference>
<dbReference type="GO" id="GO:0048536">
    <property type="term" value="P:spleen development"/>
    <property type="evidence" value="ECO:0000315"/>
    <property type="project" value="MGI"/>
</dbReference>
<dbReference type="GO" id="GO:0017145">
    <property type="term" value="P:stem cell division"/>
    <property type="evidence" value="ECO:0000315"/>
    <property type="project" value="MGI"/>
</dbReference>
<dbReference type="CDD" id="cd09528">
    <property type="entry name" value="SAM_Samd9_Samd9L"/>
    <property type="match status" value="1"/>
</dbReference>
<dbReference type="FunFam" id="1.10.150.50:FF:000096">
    <property type="entry name" value="Sterile alpha motif domain containing 9 like"/>
    <property type="match status" value="1"/>
</dbReference>
<dbReference type="Gene3D" id="1.10.150.50">
    <property type="entry name" value="Transcription Factor, Ets-1"/>
    <property type="match status" value="1"/>
</dbReference>
<dbReference type="InterPro" id="IPR001660">
    <property type="entry name" value="SAM"/>
</dbReference>
<dbReference type="InterPro" id="IPR013761">
    <property type="entry name" value="SAM/pointed_sf"/>
</dbReference>
<dbReference type="PANTHER" id="PTHR16155">
    <property type="entry name" value="DED DOMAIN-CONTAINING PROTEIN"/>
    <property type="match status" value="1"/>
</dbReference>
<dbReference type="PANTHER" id="PTHR16155:SF18">
    <property type="entry name" value="STERILE ALPHA MOTIF DOMAIN-CONTAINING PROTEIN 9-LIKE"/>
    <property type="match status" value="1"/>
</dbReference>
<dbReference type="SUPFAM" id="SSF47769">
    <property type="entry name" value="SAM/Pointed domain"/>
    <property type="match status" value="1"/>
</dbReference>
<dbReference type="PROSITE" id="PS50105">
    <property type="entry name" value="SAM_DOMAIN"/>
    <property type="match status" value="1"/>
</dbReference>
<organism>
    <name type="scientific">Mus musculus</name>
    <name type="common">Mouse</name>
    <dbReference type="NCBI Taxonomy" id="10090"/>
    <lineage>
        <taxon>Eukaryota</taxon>
        <taxon>Metazoa</taxon>
        <taxon>Chordata</taxon>
        <taxon>Craniata</taxon>
        <taxon>Vertebrata</taxon>
        <taxon>Euteleostomi</taxon>
        <taxon>Mammalia</taxon>
        <taxon>Eutheria</taxon>
        <taxon>Euarchontoglires</taxon>
        <taxon>Glires</taxon>
        <taxon>Rodentia</taxon>
        <taxon>Myomorpha</taxon>
        <taxon>Muroidea</taxon>
        <taxon>Muridae</taxon>
        <taxon>Murinae</taxon>
        <taxon>Mus</taxon>
        <taxon>Mus</taxon>
    </lineage>
</organism>
<reference key="1">
    <citation type="journal article" date="2004" name="DNA Res.">
        <title>Prediction of the coding sequences of mouse homologues of KIAA gene: IV. The complete nucleotide sequences of 500 mouse KIAA-homologous cDNAs identified by screening of terminal sequences of cDNA clones randomly sampled from size-fractionated libraries.</title>
        <authorList>
            <person name="Okazaki N."/>
            <person name="Kikuno R."/>
            <person name="Ohara R."/>
            <person name="Inamoto S."/>
            <person name="Koseki H."/>
            <person name="Hiraoka S."/>
            <person name="Saga Y."/>
            <person name="Seino S."/>
            <person name="Nishimura M."/>
            <person name="Kaisho T."/>
            <person name="Hoshino K."/>
            <person name="Kitamura H."/>
            <person name="Nagase T."/>
            <person name="Ohara O."/>
            <person name="Koga H."/>
        </authorList>
    </citation>
    <scope>NUCLEOTIDE SEQUENCE [LARGE SCALE MRNA]</scope>
    <source>
        <tissue>Thymus</tissue>
    </source>
</reference>
<reference key="2">
    <citation type="journal article" date="2010" name="Cell">
        <title>A tissue-specific atlas of mouse protein phosphorylation and expression.</title>
        <authorList>
            <person name="Huttlin E.L."/>
            <person name="Jedrychowski M.P."/>
            <person name="Elias J.E."/>
            <person name="Goswami T."/>
            <person name="Rad R."/>
            <person name="Beausoleil S.A."/>
            <person name="Villen J."/>
            <person name="Haas W."/>
            <person name="Sowa M.E."/>
            <person name="Gygi S.P."/>
        </authorList>
    </citation>
    <scope>IDENTIFICATION BY MASS SPECTROMETRY [LARGE SCALE ANALYSIS]</scope>
    <source>
        <tissue>Heart</tissue>
        <tissue>Kidney</tissue>
        <tissue>Lung</tissue>
        <tissue>Spleen</tissue>
    </source>
</reference>
<reference key="3">
    <citation type="journal article" date="2013" name="Cancer Cell">
        <title>Haploinsufficiency of SAMD9L, an endosome fusion facilitator, causes myeloid malignancies in mice mimicking human diseases with monosomy 7.</title>
        <authorList>
            <person name="Nagamachi A."/>
            <person name="Matsui H."/>
            <person name="Asou H."/>
            <person name="Ozaki Y."/>
            <person name="Aki D."/>
            <person name="Kanai A."/>
            <person name="Takubo K."/>
            <person name="Suda T."/>
            <person name="Nakamura T."/>
            <person name="Wolff L."/>
            <person name="Honda H."/>
            <person name="Inaba T."/>
        </authorList>
    </citation>
    <scope>FUNCTION</scope>
    <scope>SUBCELLULAR LOCATION</scope>
    <scope>DISRUPTION PHENOTYPE</scope>
</reference>